<feature type="chain" id="PRO_0000384255" description="Maintenance of mitochondrial morphology protein 1">
    <location>
        <begin position="1"/>
        <end position="423"/>
    </location>
</feature>
<feature type="topological domain" description="Lumenal" evidence="1">
    <location>
        <begin position="1"/>
        <end position="15"/>
    </location>
</feature>
<feature type="transmembrane region" description="Helical" evidence="1">
    <location>
        <begin position="16"/>
        <end position="36"/>
    </location>
</feature>
<feature type="topological domain" description="Cytoplasmic" evidence="1">
    <location>
        <begin position="37"/>
        <end position="423"/>
    </location>
</feature>
<feature type="domain" description="SMP-LTD" evidence="1">
    <location>
        <begin position="110"/>
        <end position="322"/>
    </location>
</feature>
<feature type="region of interest" description="Disordered" evidence="2">
    <location>
        <begin position="327"/>
        <end position="370"/>
    </location>
</feature>
<feature type="region of interest" description="Disordered" evidence="2">
    <location>
        <begin position="394"/>
        <end position="423"/>
    </location>
</feature>
<feature type="compositionally biased region" description="Basic and acidic residues" evidence="2">
    <location>
        <begin position="350"/>
        <end position="367"/>
    </location>
</feature>
<comment type="function">
    <text evidence="1">Component of the ERMES/MDM complex, which serves as a molecular tether to connect the endoplasmic reticulum (ER) and mitochondria. Components of this complex are involved in the control of mitochondrial shape and protein biogenesis, and function in nonvesicular lipid trafficking between the ER and mitochondria. The mdm12-mmm1 subcomplex functions in the major beta-barrel assembly pathway that is responsible for biogenesis of all outer membrane beta-barrel proteins, and acts in a late step after the SAM complex. The mdm10-mdm12-mmm1 subcomplex further acts in the TOM40-specific pathway after the action of the mdm12-mmm1 complex. Essential for establishing and maintaining the structure of mitochondria and maintenance of mtDNA nucleoids.</text>
</comment>
<comment type="subunit">
    <text evidence="1">Homodimer. Component of the ER-mitochondria encounter structure (ERMES) or MDM complex, composed of mmm1, mdm10, mdm12 and mdm34. A mmm1 homodimer associates with one molecule of mdm12 on each side in a pairwise head-to-tail manner, and the SMP-LTD domains of mmm1 and mdm12 generate a continuous hydrophobic tunnel for phospholipid trafficking.</text>
</comment>
<comment type="subcellular location">
    <subcellularLocation>
        <location evidence="1">Endoplasmic reticulum membrane</location>
        <topology evidence="1">Single-pass type I membrane protein</topology>
    </subcellularLocation>
    <text evidence="1">The ERMES/MDM complex localizes to a few discrete foci (around 10 per single cell), that represent mitochondria-endoplasmic reticulum junctions. These foci are often found next to mtDNA nucleoids.</text>
</comment>
<comment type="domain">
    <text evidence="1">The SMP-LTD domain is a barrel-like domain that can bind various types of glycerophospholipids in its interior and mediate their transfer between two adjacent bilayers.</text>
</comment>
<comment type="similarity">
    <text evidence="1">Belongs to the MMM1 family.</text>
</comment>
<name>MMM1_SCLS1</name>
<sequence length="423" mass="46625">MWLDDVASELSFTQGLLLGQLSIVILIGAFIKFFIFGDPPSPDVSAALRATERRSRTLAHKRSLLTLRSSTPRHASQSLNRKRSSVLRNPAPLTTNAILSKTYYNVDSHQPESLDWFNVLIAQTIAQFRADAQHDDAILTSLTKALNGGNRPDFLDEIKVTELSLGEDFPIFSNCRVIPVDEDGITLGREGGAAGREHGRLQARMDVDLSDFITLAVETKLLLNYPKPLVAVLPVALAVSVMRFSGTLSISFVPGSPLNGSPTTLAFCFLDDYRLDLSIRSLVGSRSRLQDVPKIAQLIEARLHTWFDERCVEPRFQQIELPSLWPRKKNTRGGEDLDTGSEAGGIGRARSRDVERDLREEARKEVEAETGVRVGRSKLGVSLDVPDVGLDGGSEEGLRFRRRSRGRGDEYAMPGSMPGLSMA</sequence>
<evidence type="ECO:0000255" key="1">
    <source>
        <dbReference type="HAMAP-Rule" id="MF_03103"/>
    </source>
</evidence>
<evidence type="ECO:0000256" key="2">
    <source>
        <dbReference type="SAM" id="MobiDB-lite"/>
    </source>
</evidence>
<protein>
    <recommendedName>
        <fullName evidence="1">Maintenance of mitochondrial morphology protein 1</fullName>
    </recommendedName>
</protein>
<organism>
    <name type="scientific">Sclerotinia sclerotiorum (strain ATCC 18683 / 1980 / Ss-1)</name>
    <name type="common">White mold</name>
    <name type="synonym">Whetzelinia sclerotiorum</name>
    <dbReference type="NCBI Taxonomy" id="665079"/>
    <lineage>
        <taxon>Eukaryota</taxon>
        <taxon>Fungi</taxon>
        <taxon>Dikarya</taxon>
        <taxon>Ascomycota</taxon>
        <taxon>Pezizomycotina</taxon>
        <taxon>Leotiomycetes</taxon>
        <taxon>Helotiales</taxon>
        <taxon>Sclerotiniaceae</taxon>
        <taxon>Sclerotinia</taxon>
    </lineage>
</organism>
<keyword id="KW-0256">Endoplasmic reticulum</keyword>
<keyword id="KW-0445">Lipid transport</keyword>
<keyword id="KW-0446">Lipid-binding</keyword>
<keyword id="KW-0472">Membrane</keyword>
<keyword id="KW-1185">Reference proteome</keyword>
<keyword id="KW-0812">Transmembrane</keyword>
<keyword id="KW-1133">Transmembrane helix</keyword>
<keyword id="KW-0813">Transport</keyword>
<reference key="1">
    <citation type="journal article" date="2011" name="PLoS Genet.">
        <title>Genomic analysis of the necrotrophic fungal pathogens Sclerotinia sclerotiorum and Botrytis cinerea.</title>
        <authorList>
            <person name="Amselem J."/>
            <person name="Cuomo C.A."/>
            <person name="van Kan J.A.L."/>
            <person name="Viaud M."/>
            <person name="Benito E.P."/>
            <person name="Couloux A."/>
            <person name="Coutinho P.M."/>
            <person name="de Vries R.P."/>
            <person name="Dyer P.S."/>
            <person name="Fillinger S."/>
            <person name="Fournier E."/>
            <person name="Gout L."/>
            <person name="Hahn M."/>
            <person name="Kohn L."/>
            <person name="Lapalu N."/>
            <person name="Plummer K.M."/>
            <person name="Pradier J.-M."/>
            <person name="Quevillon E."/>
            <person name="Sharon A."/>
            <person name="Simon A."/>
            <person name="ten Have A."/>
            <person name="Tudzynski B."/>
            <person name="Tudzynski P."/>
            <person name="Wincker P."/>
            <person name="Andrew M."/>
            <person name="Anthouard V."/>
            <person name="Beever R.E."/>
            <person name="Beffa R."/>
            <person name="Benoit I."/>
            <person name="Bouzid O."/>
            <person name="Brault B."/>
            <person name="Chen Z."/>
            <person name="Choquer M."/>
            <person name="Collemare J."/>
            <person name="Cotton P."/>
            <person name="Danchin E.G."/>
            <person name="Da Silva C."/>
            <person name="Gautier A."/>
            <person name="Giraud C."/>
            <person name="Giraud T."/>
            <person name="Gonzalez C."/>
            <person name="Grossetete S."/>
            <person name="Gueldener U."/>
            <person name="Henrissat B."/>
            <person name="Howlett B.J."/>
            <person name="Kodira C."/>
            <person name="Kretschmer M."/>
            <person name="Lappartient A."/>
            <person name="Leroch M."/>
            <person name="Levis C."/>
            <person name="Mauceli E."/>
            <person name="Neuveglise C."/>
            <person name="Oeser B."/>
            <person name="Pearson M."/>
            <person name="Poulain J."/>
            <person name="Poussereau N."/>
            <person name="Quesneville H."/>
            <person name="Rascle C."/>
            <person name="Schumacher J."/>
            <person name="Segurens B."/>
            <person name="Sexton A."/>
            <person name="Silva E."/>
            <person name="Sirven C."/>
            <person name="Soanes D.M."/>
            <person name="Talbot N.J."/>
            <person name="Templeton M."/>
            <person name="Yandava C."/>
            <person name="Yarden O."/>
            <person name="Zeng Q."/>
            <person name="Rollins J.A."/>
            <person name="Lebrun M.-H."/>
            <person name="Dickman M."/>
        </authorList>
    </citation>
    <scope>NUCLEOTIDE SEQUENCE [LARGE SCALE GENOMIC DNA]</scope>
    <source>
        <strain>ATCC 18683 / 1980 / Ss-1</strain>
    </source>
</reference>
<proteinExistence type="inferred from homology"/>
<dbReference type="EMBL" id="CH476621">
    <property type="protein sequence ID" value="EDN91031.1"/>
    <property type="molecule type" value="Genomic_DNA"/>
</dbReference>
<dbReference type="RefSeq" id="XP_001598345.1">
    <property type="nucleotide sequence ID" value="XM_001598295.1"/>
</dbReference>
<dbReference type="SMR" id="A7E559"/>
<dbReference type="FunCoup" id="A7E559">
    <property type="interactions" value="67"/>
</dbReference>
<dbReference type="STRING" id="665079.A7E559"/>
<dbReference type="EnsemblFungi" id="EDN91031">
    <property type="protein sequence ID" value="EDN91031"/>
    <property type="gene ID" value="SS1G_00431"/>
</dbReference>
<dbReference type="GeneID" id="5494636"/>
<dbReference type="KEGG" id="ssl:SS1G_00431"/>
<dbReference type="eggNOG" id="ENOG502QUUW">
    <property type="taxonomic scope" value="Eukaryota"/>
</dbReference>
<dbReference type="HOGENOM" id="CLU_032730_1_0_1"/>
<dbReference type="InParanoid" id="A7E559"/>
<dbReference type="OMA" id="WSFTQGL"/>
<dbReference type="Proteomes" id="UP000001312">
    <property type="component" value="Unassembled WGS sequence"/>
</dbReference>
<dbReference type="GO" id="GO:0005783">
    <property type="term" value="C:endoplasmic reticulum"/>
    <property type="evidence" value="ECO:0000318"/>
    <property type="project" value="GO_Central"/>
</dbReference>
<dbReference type="GO" id="GO:0005789">
    <property type="term" value="C:endoplasmic reticulum membrane"/>
    <property type="evidence" value="ECO:0007669"/>
    <property type="project" value="UniProtKB-SubCell"/>
</dbReference>
<dbReference type="GO" id="GO:0032865">
    <property type="term" value="C:ERMES complex"/>
    <property type="evidence" value="ECO:0000318"/>
    <property type="project" value="GO_Central"/>
</dbReference>
<dbReference type="GO" id="GO:0008289">
    <property type="term" value="F:lipid binding"/>
    <property type="evidence" value="ECO:0000318"/>
    <property type="project" value="GO_Central"/>
</dbReference>
<dbReference type="GO" id="GO:0120013">
    <property type="term" value="F:lipid transfer activity"/>
    <property type="evidence" value="ECO:0007669"/>
    <property type="project" value="EnsemblFungi"/>
</dbReference>
<dbReference type="GO" id="GO:0015917">
    <property type="term" value="P:aminophospholipid transport"/>
    <property type="evidence" value="ECO:0000318"/>
    <property type="project" value="GO_Central"/>
</dbReference>
<dbReference type="GO" id="GO:0000002">
    <property type="term" value="P:mitochondrial genome maintenance"/>
    <property type="evidence" value="ECO:0007669"/>
    <property type="project" value="UniProtKB-UniRule"/>
</dbReference>
<dbReference type="GO" id="GO:0070096">
    <property type="term" value="P:mitochondrial outer membrane translocase complex assembly"/>
    <property type="evidence" value="ECO:0007669"/>
    <property type="project" value="EnsemblFungi"/>
</dbReference>
<dbReference type="GO" id="GO:1990456">
    <property type="term" value="P:mitochondrion-endoplasmic reticulum membrane tethering"/>
    <property type="evidence" value="ECO:0000318"/>
    <property type="project" value="GO_Central"/>
</dbReference>
<dbReference type="GO" id="GO:0045040">
    <property type="term" value="P:protein insertion into mitochondrial outer membrane"/>
    <property type="evidence" value="ECO:0007669"/>
    <property type="project" value="UniProtKB-UniRule"/>
</dbReference>
<dbReference type="CDD" id="cd21671">
    <property type="entry name" value="SMP_Mmm1"/>
    <property type="match status" value="1"/>
</dbReference>
<dbReference type="HAMAP" id="MF_03103">
    <property type="entry name" value="Mmm1"/>
    <property type="match status" value="1"/>
</dbReference>
<dbReference type="InterPro" id="IPR027537">
    <property type="entry name" value="Mmm1"/>
</dbReference>
<dbReference type="InterPro" id="IPR019411">
    <property type="entry name" value="MMM1_dom"/>
</dbReference>
<dbReference type="InterPro" id="IPR031468">
    <property type="entry name" value="SMP_LBD"/>
</dbReference>
<dbReference type="PANTHER" id="PTHR13466:SF0">
    <property type="entry name" value="SMP-LTD DOMAIN-CONTAINING PROTEIN"/>
    <property type="match status" value="1"/>
</dbReference>
<dbReference type="PANTHER" id="PTHR13466">
    <property type="entry name" value="TEX2 PROTEIN-RELATED"/>
    <property type="match status" value="1"/>
</dbReference>
<dbReference type="Pfam" id="PF10296">
    <property type="entry name" value="MMM1"/>
    <property type="match status" value="1"/>
</dbReference>
<dbReference type="PROSITE" id="PS51847">
    <property type="entry name" value="SMP"/>
    <property type="match status" value="1"/>
</dbReference>
<accession>A7E559</accession>
<gene>
    <name evidence="1" type="primary">mmm1</name>
    <name type="ORF">SS1G_00431</name>
</gene>